<feature type="chain" id="PRO_0000246798" description="7-cyano-7-deazaguanine synthase">
    <location>
        <begin position="1"/>
        <end position="221"/>
    </location>
</feature>
<feature type="binding site" evidence="1">
    <location>
        <begin position="10"/>
        <end position="20"/>
    </location>
    <ligand>
        <name>ATP</name>
        <dbReference type="ChEBI" id="CHEBI:30616"/>
    </ligand>
</feature>
<feature type="binding site" evidence="1">
    <location>
        <position position="187"/>
    </location>
    <ligand>
        <name>Zn(2+)</name>
        <dbReference type="ChEBI" id="CHEBI:29105"/>
    </ligand>
</feature>
<feature type="binding site" evidence="1">
    <location>
        <position position="196"/>
    </location>
    <ligand>
        <name>Zn(2+)</name>
        <dbReference type="ChEBI" id="CHEBI:29105"/>
    </ligand>
</feature>
<feature type="binding site" evidence="1">
    <location>
        <position position="199"/>
    </location>
    <ligand>
        <name>Zn(2+)</name>
        <dbReference type="ChEBI" id="CHEBI:29105"/>
    </ligand>
</feature>
<feature type="binding site" evidence="1">
    <location>
        <position position="202"/>
    </location>
    <ligand>
        <name>Zn(2+)</name>
        <dbReference type="ChEBI" id="CHEBI:29105"/>
    </ligand>
</feature>
<sequence>MLEDKAVVVFSGGQDSTTCLFWAKERYRSLHAVIFDYGQRHKEEIQCAVDIANEQGVPYKVFDMGLLNQLTANALTRENISVQAGEAGESPSTFVAGRNHLFLSFAAVYAREMGAKHIITGVCETDFSGYPDCRDVFVKSLNVTLNLAMDEQFVIHTPLMWLNKKETWALADKMGQLEYIRAKTLTCYEGIRGDGCGTCPSCQLRQNGLDLYLREKAGAGQ</sequence>
<name>QUEC_SHOC1</name>
<comment type="function">
    <text evidence="1">Catalyzes the ATP-dependent conversion of 7-carboxy-7-deazaguanine (CDG) to 7-cyano-7-deazaguanine (preQ(0)).</text>
</comment>
<comment type="catalytic activity">
    <reaction evidence="1">
        <text>7-carboxy-7-deazaguanine + NH4(+) + ATP = 7-cyano-7-deazaguanine + ADP + phosphate + H2O + H(+)</text>
        <dbReference type="Rhea" id="RHEA:27982"/>
        <dbReference type="ChEBI" id="CHEBI:15377"/>
        <dbReference type="ChEBI" id="CHEBI:15378"/>
        <dbReference type="ChEBI" id="CHEBI:28938"/>
        <dbReference type="ChEBI" id="CHEBI:30616"/>
        <dbReference type="ChEBI" id="CHEBI:43474"/>
        <dbReference type="ChEBI" id="CHEBI:45075"/>
        <dbReference type="ChEBI" id="CHEBI:61036"/>
        <dbReference type="ChEBI" id="CHEBI:456216"/>
        <dbReference type="EC" id="6.3.4.20"/>
    </reaction>
</comment>
<comment type="cofactor">
    <cofactor evidence="1">
        <name>Zn(2+)</name>
        <dbReference type="ChEBI" id="CHEBI:29105"/>
    </cofactor>
    <text evidence="1">Binds 1 zinc ion per subunit.</text>
</comment>
<comment type="pathway">
    <text evidence="1">Purine metabolism; 7-cyano-7-deazaguanine biosynthesis.</text>
</comment>
<comment type="subunit">
    <text evidence="1">Homodimer.</text>
</comment>
<comment type="similarity">
    <text evidence="1">Belongs to the QueC family.</text>
</comment>
<dbReference type="EC" id="6.3.4.20" evidence="1"/>
<dbReference type="EMBL" id="AP006627">
    <property type="protein sequence ID" value="BAD64664.1"/>
    <property type="molecule type" value="Genomic_DNA"/>
</dbReference>
<dbReference type="RefSeq" id="WP_011246972.1">
    <property type="nucleotide sequence ID" value="NC_006582.1"/>
</dbReference>
<dbReference type="SMR" id="Q5WG41"/>
<dbReference type="STRING" id="66692.ABC2129"/>
<dbReference type="KEGG" id="bcl:ABC2129"/>
<dbReference type="eggNOG" id="COG0603">
    <property type="taxonomic scope" value="Bacteria"/>
</dbReference>
<dbReference type="HOGENOM" id="CLU_081854_0_0_9"/>
<dbReference type="OrthoDB" id="9789567at2"/>
<dbReference type="UniPathway" id="UPA00391"/>
<dbReference type="Proteomes" id="UP000001168">
    <property type="component" value="Chromosome"/>
</dbReference>
<dbReference type="GO" id="GO:0005524">
    <property type="term" value="F:ATP binding"/>
    <property type="evidence" value="ECO:0007669"/>
    <property type="project" value="UniProtKB-UniRule"/>
</dbReference>
<dbReference type="GO" id="GO:0016879">
    <property type="term" value="F:ligase activity, forming carbon-nitrogen bonds"/>
    <property type="evidence" value="ECO:0007669"/>
    <property type="project" value="UniProtKB-UniRule"/>
</dbReference>
<dbReference type="GO" id="GO:0008270">
    <property type="term" value="F:zinc ion binding"/>
    <property type="evidence" value="ECO:0007669"/>
    <property type="project" value="UniProtKB-UniRule"/>
</dbReference>
<dbReference type="GO" id="GO:0008616">
    <property type="term" value="P:queuosine biosynthetic process"/>
    <property type="evidence" value="ECO:0007669"/>
    <property type="project" value="UniProtKB-UniRule"/>
</dbReference>
<dbReference type="CDD" id="cd01995">
    <property type="entry name" value="QueC-like"/>
    <property type="match status" value="1"/>
</dbReference>
<dbReference type="FunFam" id="3.40.50.620:FF:000017">
    <property type="entry name" value="7-cyano-7-deazaguanine synthase"/>
    <property type="match status" value="1"/>
</dbReference>
<dbReference type="Gene3D" id="3.40.50.620">
    <property type="entry name" value="HUPs"/>
    <property type="match status" value="1"/>
</dbReference>
<dbReference type="HAMAP" id="MF_01633">
    <property type="entry name" value="QueC"/>
    <property type="match status" value="1"/>
</dbReference>
<dbReference type="InterPro" id="IPR018317">
    <property type="entry name" value="QueC"/>
</dbReference>
<dbReference type="InterPro" id="IPR014729">
    <property type="entry name" value="Rossmann-like_a/b/a_fold"/>
</dbReference>
<dbReference type="NCBIfam" id="TIGR00364">
    <property type="entry name" value="7-cyano-7-deazaguanine synthase QueC"/>
    <property type="match status" value="1"/>
</dbReference>
<dbReference type="PANTHER" id="PTHR42914">
    <property type="entry name" value="7-CYANO-7-DEAZAGUANINE SYNTHASE"/>
    <property type="match status" value="1"/>
</dbReference>
<dbReference type="PANTHER" id="PTHR42914:SF1">
    <property type="entry name" value="7-CYANO-7-DEAZAGUANINE SYNTHASE"/>
    <property type="match status" value="1"/>
</dbReference>
<dbReference type="Pfam" id="PF06508">
    <property type="entry name" value="QueC"/>
    <property type="match status" value="1"/>
</dbReference>
<dbReference type="PIRSF" id="PIRSF006293">
    <property type="entry name" value="ExsB"/>
    <property type="match status" value="1"/>
</dbReference>
<dbReference type="SUPFAM" id="SSF52402">
    <property type="entry name" value="Adenine nucleotide alpha hydrolases-like"/>
    <property type="match status" value="1"/>
</dbReference>
<proteinExistence type="inferred from homology"/>
<gene>
    <name evidence="1" type="primary">queC</name>
    <name type="ordered locus">ABC2129</name>
</gene>
<protein>
    <recommendedName>
        <fullName evidence="1">7-cyano-7-deazaguanine synthase</fullName>
        <ecNumber evidence="1">6.3.4.20</ecNumber>
    </recommendedName>
    <alternativeName>
        <fullName evidence="1">7-cyano-7-carbaguanine synthase</fullName>
    </alternativeName>
    <alternativeName>
        <fullName evidence="1">PreQ(0) synthase</fullName>
    </alternativeName>
    <alternativeName>
        <fullName evidence="1">Queuosine biosynthesis protein QueC</fullName>
    </alternativeName>
</protein>
<keyword id="KW-0067">ATP-binding</keyword>
<keyword id="KW-0436">Ligase</keyword>
<keyword id="KW-0479">Metal-binding</keyword>
<keyword id="KW-0547">Nucleotide-binding</keyword>
<keyword id="KW-0671">Queuosine biosynthesis</keyword>
<keyword id="KW-1185">Reference proteome</keyword>
<keyword id="KW-0862">Zinc</keyword>
<reference key="1">
    <citation type="submission" date="2003-10" db="EMBL/GenBank/DDBJ databases">
        <title>The complete genome sequence of the alkaliphilic Bacillus clausii KSM-K16.</title>
        <authorList>
            <person name="Takaki Y."/>
            <person name="Kageyama Y."/>
            <person name="Shimamura S."/>
            <person name="Suzuki H."/>
            <person name="Nishi S."/>
            <person name="Hatada Y."/>
            <person name="Kawai S."/>
            <person name="Ito S."/>
            <person name="Horikoshi K."/>
        </authorList>
    </citation>
    <scope>NUCLEOTIDE SEQUENCE [LARGE SCALE GENOMIC DNA]</scope>
    <source>
        <strain>KSM-K16</strain>
    </source>
</reference>
<evidence type="ECO:0000255" key="1">
    <source>
        <dbReference type="HAMAP-Rule" id="MF_01633"/>
    </source>
</evidence>
<organism>
    <name type="scientific">Shouchella clausii (strain KSM-K16)</name>
    <name type="common">Alkalihalobacillus clausii</name>
    <dbReference type="NCBI Taxonomy" id="66692"/>
    <lineage>
        <taxon>Bacteria</taxon>
        <taxon>Bacillati</taxon>
        <taxon>Bacillota</taxon>
        <taxon>Bacilli</taxon>
        <taxon>Bacillales</taxon>
        <taxon>Bacillaceae</taxon>
        <taxon>Shouchella</taxon>
    </lineage>
</organism>
<accession>Q5WG41</accession>